<comment type="subcellular location">
    <subcellularLocation>
        <location>Plastid</location>
        <location>Chloroplast</location>
    </subcellularLocation>
</comment>
<comment type="similarity">
    <text evidence="1">Belongs to the bacterial ribosomal protein bL34 family.</text>
</comment>
<accession>Q4G392</accession>
<sequence>MTQRTLHGTVLKKVRTSGFRSRMATKAGRRVINARRRKGRAKLTV</sequence>
<gene>
    <name evidence="1" type="primary">rpl34</name>
</gene>
<name>RK34_EMIHU</name>
<reference key="1">
    <citation type="journal article" date="2005" name="DNA Res.">
        <title>The complete plastid genome sequence of the haptophyte Emiliania huxleyi: a comparison to other plastid genomes.</title>
        <authorList>
            <person name="Sanchez-Puerta M.V."/>
            <person name="Bachvaroff T.R."/>
            <person name="Delwiche C.F."/>
        </authorList>
    </citation>
    <scope>NUCLEOTIDE SEQUENCE [LARGE SCALE GENOMIC DNA]</scope>
    <source>
        <strain>CCMP373 / CSIRO-CS-57 / BT6</strain>
    </source>
</reference>
<organism>
    <name type="scientific">Emiliania huxleyi</name>
    <name type="common">Coccolithophore</name>
    <name type="synonym">Pontosphaera huxleyi</name>
    <dbReference type="NCBI Taxonomy" id="2903"/>
    <lineage>
        <taxon>Eukaryota</taxon>
        <taxon>Haptista</taxon>
        <taxon>Haptophyta</taxon>
        <taxon>Prymnesiophyceae</taxon>
        <taxon>Isochrysidales</taxon>
        <taxon>Noelaerhabdaceae</taxon>
        <taxon>Emiliania</taxon>
    </lineage>
</organism>
<proteinExistence type="inferred from homology"/>
<keyword id="KW-0150">Chloroplast</keyword>
<keyword id="KW-0934">Plastid</keyword>
<keyword id="KW-0687">Ribonucleoprotein</keyword>
<keyword id="KW-0689">Ribosomal protein</keyword>
<feature type="chain" id="PRO_0000276527" description="Large ribosomal subunit protein bL34c">
    <location>
        <begin position="1"/>
        <end position="45"/>
    </location>
</feature>
<protein>
    <recommendedName>
        <fullName evidence="1">Large ribosomal subunit protein bL34c</fullName>
    </recommendedName>
    <alternativeName>
        <fullName evidence="2">50S ribosomal protein L34, chloroplastic</fullName>
    </alternativeName>
</protein>
<evidence type="ECO:0000255" key="1">
    <source>
        <dbReference type="HAMAP-Rule" id="MF_00391"/>
    </source>
</evidence>
<evidence type="ECO:0000305" key="2"/>
<dbReference type="EMBL" id="AY741371">
    <property type="protein sequence ID" value="AAX13874.1"/>
    <property type="molecule type" value="Genomic_DNA"/>
</dbReference>
<dbReference type="RefSeq" id="YP_277375.1">
    <property type="nucleotide sequence ID" value="NC_007288.1"/>
</dbReference>
<dbReference type="SMR" id="Q4G392"/>
<dbReference type="GeneID" id="3562454"/>
<dbReference type="GO" id="GO:0009507">
    <property type="term" value="C:chloroplast"/>
    <property type="evidence" value="ECO:0007669"/>
    <property type="project" value="UniProtKB-SubCell"/>
</dbReference>
<dbReference type="GO" id="GO:1990904">
    <property type="term" value="C:ribonucleoprotein complex"/>
    <property type="evidence" value="ECO:0007669"/>
    <property type="project" value="UniProtKB-KW"/>
</dbReference>
<dbReference type="GO" id="GO:0005840">
    <property type="term" value="C:ribosome"/>
    <property type="evidence" value="ECO:0007669"/>
    <property type="project" value="UniProtKB-KW"/>
</dbReference>
<dbReference type="GO" id="GO:0003735">
    <property type="term" value="F:structural constituent of ribosome"/>
    <property type="evidence" value="ECO:0007669"/>
    <property type="project" value="InterPro"/>
</dbReference>
<dbReference type="GO" id="GO:0006412">
    <property type="term" value="P:translation"/>
    <property type="evidence" value="ECO:0007669"/>
    <property type="project" value="UniProtKB-UniRule"/>
</dbReference>
<dbReference type="Gene3D" id="1.10.287.3980">
    <property type="match status" value="1"/>
</dbReference>
<dbReference type="HAMAP" id="MF_00391">
    <property type="entry name" value="Ribosomal_bL34"/>
    <property type="match status" value="1"/>
</dbReference>
<dbReference type="InterPro" id="IPR000271">
    <property type="entry name" value="Ribosomal_bL34"/>
</dbReference>
<dbReference type="NCBIfam" id="TIGR01030">
    <property type="entry name" value="rpmH_bact"/>
    <property type="match status" value="1"/>
</dbReference>
<dbReference type="Pfam" id="PF00468">
    <property type="entry name" value="Ribosomal_L34"/>
    <property type="match status" value="1"/>
</dbReference>
<geneLocation type="chloroplast"/>